<sequence length="133" mass="15096">MVFVNPLANALTSIYNNEMRRNKQAIIMPASKLVINVLRVMQKEGYVGEFEYIDDGRWGKITVQLLGRVNKCGPITPRYPLSYRQMIALPDYIRRYLPSKEIGIIIVSTSKGVMSHKEAARMRLGGVALGYVY</sequence>
<name>RS8_SACI6</name>
<reference key="1">
    <citation type="journal article" date="2009" name="Proc. Natl. Acad. Sci. U.S.A.">
        <title>Biogeography of the Sulfolobus islandicus pan-genome.</title>
        <authorList>
            <person name="Reno M.L."/>
            <person name="Held N.L."/>
            <person name="Fields C.J."/>
            <person name="Burke P.V."/>
            <person name="Whitaker R.J."/>
        </authorList>
    </citation>
    <scope>NUCLEOTIDE SEQUENCE [LARGE SCALE GENOMIC DNA]</scope>
    <source>
        <strain>M.16.4 / Kamchatka #3</strain>
    </source>
</reference>
<evidence type="ECO:0000255" key="1">
    <source>
        <dbReference type="HAMAP-Rule" id="MF_01302"/>
    </source>
</evidence>
<evidence type="ECO:0000305" key="2"/>
<protein>
    <recommendedName>
        <fullName evidence="1">Small ribosomal subunit protein uS8</fullName>
    </recommendedName>
    <alternativeName>
        <fullName evidence="2">30S ribosomal protein S8</fullName>
    </alternativeName>
</protein>
<comment type="function">
    <text evidence="1">One of the primary rRNA binding proteins, it binds directly to 16S rRNA central domain where it helps coordinate assembly of the platform of the 30S subunit.</text>
</comment>
<comment type="subunit">
    <text evidence="1">Part of the 30S ribosomal subunit.</text>
</comment>
<comment type="similarity">
    <text evidence="1">Belongs to the universal ribosomal protein uS8 family.</text>
</comment>
<keyword id="KW-0687">Ribonucleoprotein</keyword>
<keyword id="KW-0689">Ribosomal protein</keyword>
<keyword id="KW-0694">RNA-binding</keyword>
<keyword id="KW-0699">rRNA-binding</keyword>
<organism>
    <name type="scientific">Saccharolobus islandicus (strain M.16.4 / Kamchatka #3)</name>
    <name type="common">Sulfolobus islandicus</name>
    <dbReference type="NCBI Taxonomy" id="426118"/>
    <lineage>
        <taxon>Archaea</taxon>
        <taxon>Thermoproteota</taxon>
        <taxon>Thermoprotei</taxon>
        <taxon>Sulfolobales</taxon>
        <taxon>Sulfolobaceae</taxon>
        <taxon>Saccharolobus</taxon>
    </lineage>
</organism>
<proteinExistence type="inferred from homology"/>
<accession>C4KHH1</accession>
<dbReference type="EMBL" id="CP001402">
    <property type="protein sequence ID" value="ACR42035.1"/>
    <property type="molecule type" value="Genomic_DNA"/>
</dbReference>
<dbReference type="RefSeq" id="WP_012711433.1">
    <property type="nucleotide sequence ID" value="NC_012726.1"/>
</dbReference>
<dbReference type="SMR" id="C4KHH1"/>
<dbReference type="KEGG" id="sid:M164_1429"/>
<dbReference type="HOGENOM" id="CLU_098428_1_1_2"/>
<dbReference type="Proteomes" id="UP000001479">
    <property type="component" value="Chromosome"/>
</dbReference>
<dbReference type="GO" id="GO:1990904">
    <property type="term" value="C:ribonucleoprotein complex"/>
    <property type="evidence" value="ECO:0007669"/>
    <property type="project" value="UniProtKB-KW"/>
</dbReference>
<dbReference type="GO" id="GO:0005840">
    <property type="term" value="C:ribosome"/>
    <property type="evidence" value="ECO:0007669"/>
    <property type="project" value="UniProtKB-KW"/>
</dbReference>
<dbReference type="GO" id="GO:0019843">
    <property type="term" value="F:rRNA binding"/>
    <property type="evidence" value="ECO:0007669"/>
    <property type="project" value="UniProtKB-UniRule"/>
</dbReference>
<dbReference type="GO" id="GO:0003735">
    <property type="term" value="F:structural constituent of ribosome"/>
    <property type="evidence" value="ECO:0007669"/>
    <property type="project" value="InterPro"/>
</dbReference>
<dbReference type="GO" id="GO:0006412">
    <property type="term" value="P:translation"/>
    <property type="evidence" value="ECO:0007669"/>
    <property type="project" value="UniProtKB-UniRule"/>
</dbReference>
<dbReference type="FunFam" id="3.30.1370.30:FF:000001">
    <property type="entry name" value="40S ribosomal protein S15a"/>
    <property type="match status" value="1"/>
</dbReference>
<dbReference type="Gene3D" id="3.30.1370.30">
    <property type="match status" value="1"/>
</dbReference>
<dbReference type="Gene3D" id="3.30.1490.10">
    <property type="match status" value="1"/>
</dbReference>
<dbReference type="HAMAP" id="MF_01302_A">
    <property type="entry name" value="Ribosomal_uS8_A"/>
    <property type="match status" value="1"/>
</dbReference>
<dbReference type="InterPro" id="IPR000630">
    <property type="entry name" value="Ribosomal_uS8"/>
</dbReference>
<dbReference type="InterPro" id="IPR047863">
    <property type="entry name" value="Ribosomal_uS8_CS"/>
</dbReference>
<dbReference type="InterPro" id="IPR035987">
    <property type="entry name" value="Ribosomal_uS8_sf"/>
</dbReference>
<dbReference type="NCBIfam" id="NF003115">
    <property type="entry name" value="PRK04034.1"/>
    <property type="match status" value="1"/>
</dbReference>
<dbReference type="PANTHER" id="PTHR11758">
    <property type="entry name" value="40S RIBOSOMAL PROTEIN S15A"/>
    <property type="match status" value="1"/>
</dbReference>
<dbReference type="Pfam" id="PF00410">
    <property type="entry name" value="Ribosomal_S8"/>
    <property type="match status" value="1"/>
</dbReference>
<dbReference type="SUPFAM" id="SSF56047">
    <property type="entry name" value="Ribosomal protein S8"/>
    <property type="match status" value="1"/>
</dbReference>
<dbReference type="PROSITE" id="PS00053">
    <property type="entry name" value="RIBOSOMAL_S8"/>
    <property type="match status" value="1"/>
</dbReference>
<feature type="chain" id="PRO_1000214267" description="Small ribosomal subunit protein uS8">
    <location>
        <begin position="1"/>
        <end position="133"/>
    </location>
</feature>
<gene>
    <name evidence="1" type="primary">rps8</name>
    <name type="ordered locus">M164_1429</name>
</gene>